<reference key="1">
    <citation type="journal article" date="1997" name="Virology">
        <title>The sequence of the Orgyia pseudotsugata multinucleocapsid nuclear polyhedrosis virus genome.</title>
        <authorList>
            <person name="Ahrens C.H."/>
            <person name="Russell R.R."/>
            <person name="Funk C.J."/>
            <person name="Evans J."/>
            <person name="Harwood S."/>
            <person name="Rohrmann G.F."/>
        </authorList>
    </citation>
    <scope>NUCLEOTIDE SEQUENCE [LARGE SCALE GENOMIC DNA]</scope>
</reference>
<evidence type="ECO:0000250" key="1"/>
<evidence type="ECO:0000305" key="2"/>
<keyword id="KW-0049">Antioxidant</keyword>
<keyword id="KW-0186">Copper</keyword>
<keyword id="KW-1015">Disulfide bond</keyword>
<keyword id="KW-0426">Late protein</keyword>
<keyword id="KW-0479">Metal-binding</keyword>
<keyword id="KW-0560">Oxidoreductase</keyword>
<keyword id="KW-1185">Reference proteome</keyword>
<keyword id="KW-0862">Zinc</keyword>
<protein>
    <recommendedName>
        <fullName>Putative superoxide dismutase [Cu-Zn]</fullName>
        <ecNumber>1.15.1.1</ecNumber>
    </recommendedName>
</protein>
<accession>O12933</accession>
<sequence>MKAICIVAGEASGRIYFKQGAPDEPVSITGYLLNLPRGLHGFHVHEFGDTSNGCTSAGEHFNPTRQRHGAPDAAERHVGDLGNVRSAGCTALTAIHMSDNVITLFGPLSILGRSLVVHTDRDDLGLGEHPLSKTTGNSGGRLGCGIIGVCAN</sequence>
<gene>
    <name type="primary">SOD</name>
    <name type="ORF">ORF29</name>
</gene>
<name>SODC_NPVOP</name>
<proteinExistence type="inferred from homology"/>
<organismHost>
    <name type="scientific">Orgyia pseudotsugata</name>
    <name type="common">Douglas-fir tussock moth</name>
    <dbReference type="NCBI Taxonomy" id="33414"/>
</organismHost>
<dbReference type="EC" id="1.15.1.1"/>
<dbReference type="EMBL" id="U75930">
    <property type="protein sequence ID" value="AAC59028.1"/>
    <property type="molecule type" value="Genomic_DNA"/>
</dbReference>
<dbReference type="RefSeq" id="NP_046185.1">
    <property type="nucleotide sequence ID" value="NC_001875.2"/>
</dbReference>
<dbReference type="SMR" id="O12933"/>
<dbReference type="KEGG" id="vg:912048"/>
<dbReference type="OrthoDB" id="15673at10239"/>
<dbReference type="Proteomes" id="UP000009248">
    <property type="component" value="Genome"/>
</dbReference>
<dbReference type="GO" id="GO:0005507">
    <property type="term" value="F:copper ion binding"/>
    <property type="evidence" value="ECO:0007669"/>
    <property type="project" value="InterPro"/>
</dbReference>
<dbReference type="GO" id="GO:0004784">
    <property type="term" value="F:superoxide dismutase activity"/>
    <property type="evidence" value="ECO:0007669"/>
    <property type="project" value="UniProtKB-EC"/>
</dbReference>
<dbReference type="CDD" id="cd00305">
    <property type="entry name" value="Cu-Zn_Superoxide_Dismutase"/>
    <property type="match status" value="1"/>
</dbReference>
<dbReference type="FunFam" id="2.60.40.200:FF:000003">
    <property type="entry name" value="Superoxide dismutase [Cu-Zn], chloroplastic"/>
    <property type="match status" value="1"/>
</dbReference>
<dbReference type="Gene3D" id="2.60.40.200">
    <property type="entry name" value="Superoxide dismutase, copper/zinc binding domain"/>
    <property type="match status" value="1"/>
</dbReference>
<dbReference type="InterPro" id="IPR036423">
    <property type="entry name" value="SOD-like_Cu/Zn_dom_sf"/>
</dbReference>
<dbReference type="InterPro" id="IPR024134">
    <property type="entry name" value="SOD_Cu/Zn_/chaperone"/>
</dbReference>
<dbReference type="InterPro" id="IPR018152">
    <property type="entry name" value="SOD_Cu/Zn_BS"/>
</dbReference>
<dbReference type="InterPro" id="IPR001424">
    <property type="entry name" value="SOD_Cu_Zn_dom"/>
</dbReference>
<dbReference type="PANTHER" id="PTHR10003">
    <property type="entry name" value="SUPEROXIDE DISMUTASE CU-ZN -RELATED"/>
    <property type="match status" value="1"/>
</dbReference>
<dbReference type="Pfam" id="PF00080">
    <property type="entry name" value="Sod_Cu"/>
    <property type="match status" value="1"/>
</dbReference>
<dbReference type="PRINTS" id="PR00068">
    <property type="entry name" value="CUZNDISMTASE"/>
</dbReference>
<dbReference type="SUPFAM" id="SSF49329">
    <property type="entry name" value="Cu,Zn superoxide dismutase-like"/>
    <property type="match status" value="1"/>
</dbReference>
<dbReference type="PROSITE" id="PS00087">
    <property type="entry name" value="SOD_CU_ZN_1"/>
    <property type="match status" value="1"/>
</dbReference>
<dbReference type="PROSITE" id="PS00332">
    <property type="entry name" value="SOD_CU_ZN_2"/>
    <property type="match status" value="1"/>
</dbReference>
<comment type="function">
    <text>Destroys radicals which are normally produced within the cells and which are toxic to biological systems.</text>
</comment>
<comment type="catalytic activity">
    <reaction>
        <text>2 superoxide + 2 H(+) = H2O2 + O2</text>
        <dbReference type="Rhea" id="RHEA:20696"/>
        <dbReference type="ChEBI" id="CHEBI:15378"/>
        <dbReference type="ChEBI" id="CHEBI:15379"/>
        <dbReference type="ChEBI" id="CHEBI:16240"/>
        <dbReference type="ChEBI" id="CHEBI:18421"/>
        <dbReference type="EC" id="1.15.1.1"/>
    </reaction>
</comment>
<comment type="cofactor">
    <cofactor evidence="1">
        <name>Cu cation</name>
        <dbReference type="ChEBI" id="CHEBI:23378"/>
    </cofactor>
    <text evidence="1">Binds 1 copper ion per subunit.</text>
</comment>
<comment type="cofactor">
    <cofactor evidence="1">
        <name>Zn(2+)</name>
        <dbReference type="ChEBI" id="CHEBI:29105"/>
    </cofactor>
    <text evidence="1">Binds 1 zinc ion per subunit.</text>
</comment>
<comment type="similarity">
    <text evidence="2">Belongs to the Cu-Zn superoxide dismutase family.</text>
</comment>
<feature type="chain" id="PRO_0000164163" description="Putative superoxide dismutase [Cu-Zn]">
    <location>
        <begin position="1"/>
        <end position="152"/>
    </location>
</feature>
<feature type="binding site" evidence="1">
    <location>
        <position position="43"/>
    </location>
    <ligand>
        <name>Cu cation</name>
        <dbReference type="ChEBI" id="CHEBI:23378"/>
        <note>catalytic</note>
    </ligand>
</feature>
<feature type="binding site" evidence="1">
    <location>
        <position position="45"/>
    </location>
    <ligand>
        <name>Cu cation</name>
        <dbReference type="ChEBI" id="CHEBI:23378"/>
        <note>catalytic</note>
    </ligand>
</feature>
<feature type="binding site" evidence="1">
    <location>
        <position position="60"/>
    </location>
    <ligand>
        <name>Cu cation</name>
        <dbReference type="ChEBI" id="CHEBI:23378"/>
        <note>catalytic</note>
    </ligand>
</feature>
<feature type="binding site" evidence="1">
    <location>
        <position position="60"/>
    </location>
    <ligand>
        <name>Zn(2+)</name>
        <dbReference type="ChEBI" id="CHEBI:29105"/>
        <note>structural</note>
    </ligand>
</feature>
<feature type="binding site" evidence="1">
    <location>
        <position position="68"/>
    </location>
    <ligand>
        <name>Zn(2+)</name>
        <dbReference type="ChEBI" id="CHEBI:29105"/>
        <note>structural</note>
    </ligand>
</feature>
<feature type="binding site" evidence="1">
    <location>
        <position position="77"/>
    </location>
    <ligand>
        <name>Zn(2+)</name>
        <dbReference type="ChEBI" id="CHEBI:29105"/>
        <note>structural</note>
    </ligand>
</feature>
<feature type="binding site" evidence="1">
    <location>
        <position position="80"/>
    </location>
    <ligand>
        <name>Zn(2+)</name>
        <dbReference type="ChEBI" id="CHEBI:29105"/>
        <note>structural</note>
    </ligand>
</feature>
<feature type="binding site" evidence="1">
    <location>
        <position position="118"/>
    </location>
    <ligand>
        <name>Cu cation</name>
        <dbReference type="ChEBI" id="CHEBI:23378"/>
        <note>catalytic</note>
    </ligand>
</feature>
<feature type="disulfide bond" evidence="1">
    <location>
        <begin position="54"/>
        <end position="144"/>
    </location>
</feature>
<organism>
    <name type="scientific">Orgyia pseudotsugata multicapsid polyhedrosis virus</name>
    <name type="common">OpMNPV</name>
    <dbReference type="NCBI Taxonomy" id="262177"/>
    <lineage>
        <taxon>Viruses</taxon>
        <taxon>Viruses incertae sedis</taxon>
        <taxon>Naldaviricetes</taxon>
        <taxon>Lefavirales</taxon>
        <taxon>Baculoviridae</taxon>
        <taxon>Alphabaculovirus</taxon>
        <taxon>Alphabaculovirus orpseudotsugatae</taxon>
    </lineage>
</organism>